<evidence type="ECO:0000255" key="1">
    <source>
        <dbReference type="HAMAP-Rule" id="MF_01540"/>
    </source>
</evidence>
<reference key="1">
    <citation type="submission" date="2006-08" db="EMBL/GenBank/DDBJ databases">
        <title>Complete sequence of chromosome 1 of Shewanella sp. MR-7.</title>
        <authorList>
            <person name="Copeland A."/>
            <person name="Lucas S."/>
            <person name="Lapidus A."/>
            <person name="Barry K."/>
            <person name="Detter J.C."/>
            <person name="Glavina del Rio T."/>
            <person name="Hammon N."/>
            <person name="Israni S."/>
            <person name="Dalin E."/>
            <person name="Tice H."/>
            <person name="Pitluck S."/>
            <person name="Kiss H."/>
            <person name="Brettin T."/>
            <person name="Bruce D."/>
            <person name="Han C."/>
            <person name="Tapia R."/>
            <person name="Gilna P."/>
            <person name="Schmutz J."/>
            <person name="Larimer F."/>
            <person name="Land M."/>
            <person name="Hauser L."/>
            <person name="Kyrpides N."/>
            <person name="Mikhailova N."/>
            <person name="Nealson K."/>
            <person name="Konstantinidis K."/>
            <person name="Klappenbach J."/>
            <person name="Tiedje J."/>
            <person name="Richardson P."/>
        </authorList>
    </citation>
    <scope>NUCLEOTIDE SEQUENCE [LARGE SCALE GENOMIC DNA]</scope>
    <source>
        <strain>MR-7</strain>
    </source>
</reference>
<name>CYSI_SHESR</name>
<sequence length="565" mass="62971">MSEQKLALNEYLKTDSDYLRGTIKEGLDSSVTGSFSDGDQQLIKFHGFYQQDDRDLRNERKEQKLEPLYSFMLRARVPGGVCTPKQWLGVDEIASTLTSSNSIRLTTRQTFQYHGIPKRNLKTIIQGLDREALDSIAACGDVNRNVMCNPNPVESKLHAQAYEVAKKLSDHLLPHTRAYAEIWLDEEKLLTTEDETVEPVYGKTYLPRKFKMAVAVPPDNDVDVYTNDLGFIAVAENGELVGFNLTAGGGMGSTHGEVETFPRLADDFGFIKTEDVMKFAEAVMTVQRDWGNRTNRKRSRLKYTIVDHGYEKFKAEVEARAGVKFEPKRDVVIGDRGDRYGWVEGVDGKWHLTLFIESGRIKDVPGKSLQTGMREIAKIHKGDFRMTSNQNMIIAGVAPEDKATIEGLARKHGLLGQVLTQTRGHSIACVALPTCPLAMAEAERYFPEFIDHIDALQAKNGISDQAIVVRMTGCPNGCARPFAAEIGLVGKAPGRYNLYLGANFEGTRLNKMYRENIQEAEILAELDALFARYAVERNAGETFGNFTVRTGVVKAVIDAAKDFHG</sequence>
<gene>
    <name evidence="1" type="primary">cysI</name>
    <name type="ordered locus">Shewmr7_0893</name>
</gene>
<protein>
    <recommendedName>
        <fullName evidence="1">Sulfite reductase [NADPH] hemoprotein beta-component</fullName>
        <shortName evidence="1">SiR-HP</shortName>
        <shortName evidence="1">SiRHP</shortName>
        <ecNumber evidence="1">1.8.1.2</ecNumber>
    </recommendedName>
</protein>
<proteinExistence type="inferred from homology"/>
<organism>
    <name type="scientific">Shewanella sp. (strain MR-7)</name>
    <dbReference type="NCBI Taxonomy" id="60481"/>
    <lineage>
        <taxon>Bacteria</taxon>
        <taxon>Pseudomonadati</taxon>
        <taxon>Pseudomonadota</taxon>
        <taxon>Gammaproteobacteria</taxon>
        <taxon>Alteromonadales</taxon>
        <taxon>Shewanellaceae</taxon>
        <taxon>Shewanella</taxon>
    </lineage>
</organism>
<comment type="function">
    <text evidence="1">Component of the sulfite reductase complex that catalyzes the 6-electron reduction of sulfite to sulfide. This is one of several activities required for the biosynthesis of L-cysteine from sulfate.</text>
</comment>
<comment type="catalytic activity">
    <reaction evidence="1">
        <text>hydrogen sulfide + 3 NADP(+) + 3 H2O = sulfite + 3 NADPH + 4 H(+)</text>
        <dbReference type="Rhea" id="RHEA:13801"/>
        <dbReference type="ChEBI" id="CHEBI:15377"/>
        <dbReference type="ChEBI" id="CHEBI:15378"/>
        <dbReference type="ChEBI" id="CHEBI:17359"/>
        <dbReference type="ChEBI" id="CHEBI:29919"/>
        <dbReference type="ChEBI" id="CHEBI:57783"/>
        <dbReference type="ChEBI" id="CHEBI:58349"/>
        <dbReference type="EC" id="1.8.1.2"/>
    </reaction>
</comment>
<comment type="cofactor">
    <cofactor evidence="1">
        <name>siroheme</name>
        <dbReference type="ChEBI" id="CHEBI:60052"/>
    </cofactor>
    <text evidence="1">Binds 1 siroheme per subunit.</text>
</comment>
<comment type="cofactor">
    <cofactor evidence="1">
        <name>[4Fe-4S] cluster</name>
        <dbReference type="ChEBI" id="CHEBI:49883"/>
    </cofactor>
    <text evidence="1">Binds 1 [4Fe-4S] cluster per subunit.</text>
</comment>
<comment type="pathway">
    <text evidence="1">Sulfur metabolism; hydrogen sulfide biosynthesis; hydrogen sulfide from sulfite (NADPH route): step 1/1.</text>
</comment>
<comment type="subunit">
    <text evidence="1">Alpha(8)-beta(8). The alpha component is a flavoprotein, the beta component is a hemoprotein.</text>
</comment>
<comment type="similarity">
    <text evidence="1">Belongs to the nitrite and sulfite reductase 4Fe-4S domain family.</text>
</comment>
<keyword id="KW-0004">4Fe-4S</keyword>
<keyword id="KW-0028">Amino-acid biosynthesis</keyword>
<keyword id="KW-0198">Cysteine biosynthesis</keyword>
<keyword id="KW-0349">Heme</keyword>
<keyword id="KW-0408">Iron</keyword>
<keyword id="KW-0411">Iron-sulfur</keyword>
<keyword id="KW-0479">Metal-binding</keyword>
<keyword id="KW-0521">NADP</keyword>
<keyword id="KW-0560">Oxidoreductase</keyword>
<feature type="chain" id="PRO_1000068773" description="Sulfite reductase [NADPH] hemoprotein beta-component">
    <location>
        <begin position="1"/>
        <end position="565"/>
    </location>
</feature>
<feature type="binding site" evidence="1">
    <location>
        <position position="429"/>
    </location>
    <ligand>
        <name>[4Fe-4S] cluster</name>
        <dbReference type="ChEBI" id="CHEBI:49883"/>
    </ligand>
</feature>
<feature type="binding site" evidence="1">
    <location>
        <position position="435"/>
    </location>
    <ligand>
        <name>[4Fe-4S] cluster</name>
        <dbReference type="ChEBI" id="CHEBI:49883"/>
    </ligand>
</feature>
<feature type="binding site" evidence="1">
    <location>
        <position position="474"/>
    </location>
    <ligand>
        <name>[4Fe-4S] cluster</name>
        <dbReference type="ChEBI" id="CHEBI:49883"/>
    </ligand>
</feature>
<feature type="binding site" evidence="1">
    <location>
        <position position="478"/>
    </location>
    <ligand>
        <name>[4Fe-4S] cluster</name>
        <dbReference type="ChEBI" id="CHEBI:49883"/>
    </ligand>
</feature>
<feature type="binding site" description="axial binding residue" evidence="1">
    <location>
        <position position="478"/>
    </location>
    <ligand>
        <name>siroheme</name>
        <dbReference type="ChEBI" id="CHEBI:60052"/>
    </ligand>
    <ligandPart>
        <name>Fe</name>
        <dbReference type="ChEBI" id="CHEBI:18248"/>
    </ligandPart>
</feature>
<accession>Q0HYB3</accession>
<dbReference type="EC" id="1.8.1.2" evidence="1"/>
<dbReference type="EMBL" id="CP000444">
    <property type="protein sequence ID" value="ABI41892.1"/>
    <property type="molecule type" value="Genomic_DNA"/>
</dbReference>
<dbReference type="SMR" id="Q0HYB3"/>
<dbReference type="KEGG" id="shm:Shewmr7_0893"/>
<dbReference type="HOGENOM" id="CLU_001975_3_2_6"/>
<dbReference type="UniPathway" id="UPA00140">
    <property type="reaction ID" value="UER00207"/>
</dbReference>
<dbReference type="GO" id="GO:0009337">
    <property type="term" value="C:sulfite reductase complex (NADPH)"/>
    <property type="evidence" value="ECO:0007669"/>
    <property type="project" value="InterPro"/>
</dbReference>
<dbReference type="GO" id="GO:0051539">
    <property type="term" value="F:4 iron, 4 sulfur cluster binding"/>
    <property type="evidence" value="ECO:0007669"/>
    <property type="project" value="UniProtKB-KW"/>
</dbReference>
<dbReference type="GO" id="GO:0020037">
    <property type="term" value="F:heme binding"/>
    <property type="evidence" value="ECO:0007669"/>
    <property type="project" value="InterPro"/>
</dbReference>
<dbReference type="GO" id="GO:0046872">
    <property type="term" value="F:metal ion binding"/>
    <property type="evidence" value="ECO:0007669"/>
    <property type="project" value="UniProtKB-KW"/>
</dbReference>
<dbReference type="GO" id="GO:0050661">
    <property type="term" value="F:NADP binding"/>
    <property type="evidence" value="ECO:0007669"/>
    <property type="project" value="InterPro"/>
</dbReference>
<dbReference type="GO" id="GO:0050311">
    <property type="term" value="F:sulfite reductase (ferredoxin) activity"/>
    <property type="evidence" value="ECO:0007669"/>
    <property type="project" value="TreeGrafter"/>
</dbReference>
<dbReference type="GO" id="GO:0004783">
    <property type="term" value="F:sulfite reductase (NADPH) activity"/>
    <property type="evidence" value="ECO:0007669"/>
    <property type="project" value="UniProtKB-UniRule"/>
</dbReference>
<dbReference type="GO" id="GO:0019344">
    <property type="term" value="P:cysteine biosynthetic process"/>
    <property type="evidence" value="ECO:0007669"/>
    <property type="project" value="UniProtKB-KW"/>
</dbReference>
<dbReference type="GO" id="GO:0070814">
    <property type="term" value="P:hydrogen sulfide biosynthetic process"/>
    <property type="evidence" value="ECO:0007669"/>
    <property type="project" value="UniProtKB-UniRule"/>
</dbReference>
<dbReference type="GO" id="GO:0000103">
    <property type="term" value="P:sulfate assimilation"/>
    <property type="evidence" value="ECO:0007669"/>
    <property type="project" value="UniProtKB-UniRule"/>
</dbReference>
<dbReference type="FunFam" id="3.30.413.10:FF:000003">
    <property type="entry name" value="Sulfite reductase [NADPH] hemoprotein beta-component"/>
    <property type="match status" value="1"/>
</dbReference>
<dbReference type="FunFam" id="3.30.413.10:FF:000004">
    <property type="entry name" value="Sulfite reductase [NADPH] hemoprotein beta-component"/>
    <property type="match status" value="1"/>
</dbReference>
<dbReference type="Gene3D" id="3.30.413.10">
    <property type="entry name" value="Sulfite Reductase Hemoprotein, domain 1"/>
    <property type="match status" value="2"/>
</dbReference>
<dbReference type="HAMAP" id="MF_01540">
    <property type="entry name" value="CysI"/>
    <property type="match status" value="1"/>
</dbReference>
<dbReference type="InterPro" id="IPR011786">
    <property type="entry name" value="CysI"/>
</dbReference>
<dbReference type="InterPro" id="IPR005117">
    <property type="entry name" value="NiRdtase/SiRdtase_haem-b_fer"/>
</dbReference>
<dbReference type="InterPro" id="IPR036136">
    <property type="entry name" value="Nit/Sulf_reduc_fer-like_dom_sf"/>
</dbReference>
<dbReference type="InterPro" id="IPR006067">
    <property type="entry name" value="NO2/SO3_Rdtase_4Fe4S_dom"/>
</dbReference>
<dbReference type="InterPro" id="IPR045169">
    <property type="entry name" value="NO2/SO3_Rdtase_4Fe4S_prot"/>
</dbReference>
<dbReference type="InterPro" id="IPR045854">
    <property type="entry name" value="NO2/SO3_Rdtase_4Fe4S_sf"/>
</dbReference>
<dbReference type="InterPro" id="IPR006066">
    <property type="entry name" value="NO2/SO3_Rdtase_FeS/sirohaem_BS"/>
</dbReference>
<dbReference type="NCBIfam" id="TIGR02041">
    <property type="entry name" value="CysI"/>
    <property type="match status" value="1"/>
</dbReference>
<dbReference type="NCBIfam" id="NF010029">
    <property type="entry name" value="PRK13504.1"/>
    <property type="match status" value="1"/>
</dbReference>
<dbReference type="PANTHER" id="PTHR11493:SF47">
    <property type="entry name" value="SULFITE REDUCTASE [NADPH] SUBUNIT BETA"/>
    <property type="match status" value="1"/>
</dbReference>
<dbReference type="PANTHER" id="PTHR11493">
    <property type="entry name" value="SULFITE REDUCTASE [NADPH] SUBUNIT BETA-RELATED"/>
    <property type="match status" value="1"/>
</dbReference>
<dbReference type="Pfam" id="PF01077">
    <property type="entry name" value="NIR_SIR"/>
    <property type="match status" value="1"/>
</dbReference>
<dbReference type="Pfam" id="PF03460">
    <property type="entry name" value="NIR_SIR_ferr"/>
    <property type="match status" value="2"/>
</dbReference>
<dbReference type="PRINTS" id="PR00397">
    <property type="entry name" value="SIROHAEM"/>
</dbReference>
<dbReference type="SUPFAM" id="SSF56014">
    <property type="entry name" value="Nitrite and sulphite reductase 4Fe-4S domain-like"/>
    <property type="match status" value="2"/>
</dbReference>
<dbReference type="SUPFAM" id="SSF55124">
    <property type="entry name" value="Nitrite/Sulfite reductase N-terminal domain-like"/>
    <property type="match status" value="2"/>
</dbReference>
<dbReference type="PROSITE" id="PS00365">
    <property type="entry name" value="NIR_SIR"/>
    <property type="match status" value="1"/>
</dbReference>